<accession>P98197</accession>
<accession>B2RS49</accession>
<protein>
    <recommendedName>
        <fullName>Phospholipid-transporting ATPase IH</fullName>
        <ecNumber evidence="2">7.6.2.1</ecNumber>
    </recommendedName>
    <alternativeName>
        <fullName>ATPase IS</fullName>
    </alternativeName>
    <alternativeName>
        <fullName>ATPase class VI type 11A</fullName>
    </alternativeName>
    <alternativeName>
        <fullName>P4-ATPase flippase complex alpha subunit ATP11A</fullName>
    </alternativeName>
</protein>
<dbReference type="EC" id="7.6.2.1" evidence="2"/>
<dbReference type="EMBL" id="AF156551">
    <property type="protein sequence ID" value="AAF09449.1"/>
    <property type="molecule type" value="mRNA"/>
</dbReference>
<dbReference type="EMBL" id="BC138715">
    <property type="protein sequence ID" value="AAI38716.1"/>
    <property type="molecule type" value="mRNA"/>
</dbReference>
<dbReference type="CCDS" id="CCDS40223.1"/>
<dbReference type="RefSeq" id="NP_056619.1">
    <property type="nucleotide sequence ID" value="NM_015804.3"/>
</dbReference>
<dbReference type="RefSeq" id="XP_011240370.1">
    <property type="nucleotide sequence ID" value="XM_011242068.1"/>
</dbReference>
<dbReference type="SMR" id="P98197"/>
<dbReference type="FunCoup" id="P98197">
    <property type="interactions" value="610"/>
</dbReference>
<dbReference type="STRING" id="10090.ENSMUSP00000088779"/>
<dbReference type="iPTMnet" id="P98197"/>
<dbReference type="PhosphoSitePlus" id="P98197"/>
<dbReference type="SwissPalm" id="P98197"/>
<dbReference type="jPOST" id="P98197"/>
<dbReference type="PaxDb" id="10090-ENSMUSP00000088779"/>
<dbReference type="ProteomicsDB" id="281928"/>
<dbReference type="Pumba" id="P98197"/>
<dbReference type="Antibodypedia" id="48747">
    <property type="antibodies" value="57 antibodies from 23 providers"/>
</dbReference>
<dbReference type="DNASU" id="50770"/>
<dbReference type="Ensembl" id="ENSMUST00000091237.12">
    <property type="protein sequence ID" value="ENSMUSP00000088779.6"/>
    <property type="gene ID" value="ENSMUSG00000031441.16"/>
</dbReference>
<dbReference type="GeneID" id="50770"/>
<dbReference type="KEGG" id="mmu:50770"/>
<dbReference type="UCSC" id="uc009kwg.1">
    <property type="organism name" value="mouse"/>
</dbReference>
<dbReference type="AGR" id="MGI:1354735"/>
<dbReference type="CTD" id="23250"/>
<dbReference type="MGI" id="MGI:1354735">
    <property type="gene designation" value="Atp11a"/>
</dbReference>
<dbReference type="VEuPathDB" id="HostDB:ENSMUSG00000031441"/>
<dbReference type="eggNOG" id="KOG0206">
    <property type="taxonomic scope" value="Eukaryota"/>
</dbReference>
<dbReference type="GeneTree" id="ENSGT00940000157849"/>
<dbReference type="HOGENOM" id="CLU_000846_3_2_1"/>
<dbReference type="InParanoid" id="P98197"/>
<dbReference type="OMA" id="XPFLSYQ"/>
<dbReference type="OrthoDB" id="377733at2759"/>
<dbReference type="PhylomeDB" id="P98197"/>
<dbReference type="TreeFam" id="TF326897"/>
<dbReference type="BRENDA" id="7.6.2.1">
    <property type="organism ID" value="3474"/>
</dbReference>
<dbReference type="Reactome" id="R-MMU-6798695">
    <property type="pathway name" value="Neutrophil degranulation"/>
</dbReference>
<dbReference type="Reactome" id="R-MMU-936837">
    <property type="pathway name" value="Ion transport by P-type ATPases"/>
</dbReference>
<dbReference type="BioGRID-ORCS" id="50770">
    <property type="hits" value="2 hits in 79 CRISPR screens"/>
</dbReference>
<dbReference type="ChiTaRS" id="Atp11a">
    <property type="organism name" value="mouse"/>
</dbReference>
<dbReference type="PRO" id="PR:P98197"/>
<dbReference type="Proteomes" id="UP000000589">
    <property type="component" value="Chromosome 8"/>
</dbReference>
<dbReference type="RNAct" id="P98197">
    <property type="molecule type" value="protein"/>
</dbReference>
<dbReference type="Bgee" id="ENSMUSG00000031441">
    <property type="expression patterns" value="Expressed in lacrimal gland and 272 other cell types or tissues"/>
</dbReference>
<dbReference type="ExpressionAtlas" id="P98197">
    <property type="expression patterns" value="baseline and differential"/>
</dbReference>
<dbReference type="GO" id="GO:0005769">
    <property type="term" value="C:early endosome"/>
    <property type="evidence" value="ECO:0007669"/>
    <property type="project" value="UniProtKB-SubCell"/>
</dbReference>
<dbReference type="GO" id="GO:0005789">
    <property type="term" value="C:endoplasmic reticulum membrane"/>
    <property type="evidence" value="ECO:0007669"/>
    <property type="project" value="UniProtKB-SubCell"/>
</dbReference>
<dbReference type="GO" id="GO:0005886">
    <property type="term" value="C:plasma membrane"/>
    <property type="evidence" value="ECO:0000250"/>
    <property type="project" value="UniProtKB"/>
</dbReference>
<dbReference type="GO" id="GO:0055037">
    <property type="term" value="C:recycling endosome"/>
    <property type="evidence" value="ECO:0007669"/>
    <property type="project" value="UniProtKB-SubCell"/>
</dbReference>
<dbReference type="GO" id="GO:0005524">
    <property type="term" value="F:ATP binding"/>
    <property type="evidence" value="ECO:0007669"/>
    <property type="project" value="UniProtKB-KW"/>
</dbReference>
<dbReference type="GO" id="GO:0016887">
    <property type="term" value="F:ATP hydrolysis activity"/>
    <property type="evidence" value="ECO:0007669"/>
    <property type="project" value="InterPro"/>
</dbReference>
<dbReference type="GO" id="GO:0000287">
    <property type="term" value="F:magnesium ion binding"/>
    <property type="evidence" value="ECO:0007669"/>
    <property type="project" value="InterPro"/>
</dbReference>
<dbReference type="GO" id="GO:0090555">
    <property type="term" value="F:phosphatidylethanolamine flippase activity"/>
    <property type="evidence" value="ECO:0000250"/>
    <property type="project" value="UniProtKB"/>
</dbReference>
<dbReference type="GO" id="GO:0090556">
    <property type="term" value="F:phosphatidylserine floppase activity"/>
    <property type="evidence" value="ECO:0007669"/>
    <property type="project" value="RHEA"/>
</dbReference>
<dbReference type="GO" id="GO:0001701">
    <property type="term" value="P:in utero embryonic development"/>
    <property type="evidence" value="ECO:0000315"/>
    <property type="project" value="MGI"/>
</dbReference>
<dbReference type="GO" id="GO:0010831">
    <property type="term" value="P:positive regulation of myotube differentiation"/>
    <property type="evidence" value="ECO:0000315"/>
    <property type="project" value="UniProtKB"/>
</dbReference>
<dbReference type="CDD" id="cd02073">
    <property type="entry name" value="P-type_ATPase_APLT_Dnf-like"/>
    <property type="match status" value="1"/>
</dbReference>
<dbReference type="FunFam" id="2.70.150.10:FF:000009">
    <property type="entry name" value="Phospholipid-transporting ATPase"/>
    <property type="match status" value="1"/>
</dbReference>
<dbReference type="FunFam" id="3.40.1110.10:FF:000016">
    <property type="entry name" value="Phospholipid-transporting ATPase"/>
    <property type="match status" value="1"/>
</dbReference>
<dbReference type="FunFam" id="3.40.50.1000:FF:000012">
    <property type="entry name" value="Phospholipid-transporting ATPase"/>
    <property type="match status" value="1"/>
</dbReference>
<dbReference type="Gene3D" id="3.40.1110.10">
    <property type="entry name" value="Calcium-transporting ATPase, cytoplasmic domain N"/>
    <property type="match status" value="1"/>
</dbReference>
<dbReference type="Gene3D" id="2.70.150.10">
    <property type="entry name" value="Calcium-transporting ATPase, cytoplasmic transduction domain A"/>
    <property type="match status" value="1"/>
</dbReference>
<dbReference type="Gene3D" id="3.40.50.1000">
    <property type="entry name" value="HAD superfamily/HAD-like"/>
    <property type="match status" value="1"/>
</dbReference>
<dbReference type="InterPro" id="IPR023299">
    <property type="entry name" value="ATPase_P-typ_cyto_dom_N"/>
</dbReference>
<dbReference type="InterPro" id="IPR018303">
    <property type="entry name" value="ATPase_P-typ_P_site"/>
</dbReference>
<dbReference type="InterPro" id="IPR023298">
    <property type="entry name" value="ATPase_P-typ_TM_dom_sf"/>
</dbReference>
<dbReference type="InterPro" id="IPR008250">
    <property type="entry name" value="ATPase_P-typ_transduc_dom_A_sf"/>
</dbReference>
<dbReference type="InterPro" id="IPR036412">
    <property type="entry name" value="HAD-like_sf"/>
</dbReference>
<dbReference type="InterPro" id="IPR023214">
    <property type="entry name" value="HAD_sf"/>
</dbReference>
<dbReference type="InterPro" id="IPR006539">
    <property type="entry name" value="P-type_ATPase_IV"/>
</dbReference>
<dbReference type="InterPro" id="IPR032631">
    <property type="entry name" value="P-type_ATPase_N"/>
</dbReference>
<dbReference type="InterPro" id="IPR001757">
    <property type="entry name" value="P_typ_ATPase"/>
</dbReference>
<dbReference type="InterPro" id="IPR032630">
    <property type="entry name" value="P_typ_ATPase_c"/>
</dbReference>
<dbReference type="InterPro" id="IPR044492">
    <property type="entry name" value="P_typ_ATPase_HD_dom"/>
</dbReference>
<dbReference type="NCBIfam" id="TIGR01652">
    <property type="entry name" value="ATPase-Plipid"/>
    <property type="match status" value="1"/>
</dbReference>
<dbReference type="NCBIfam" id="TIGR01494">
    <property type="entry name" value="ATPase_P-type"/>
    <property type="match status" value="2"/>
</dbReference>
<dbReference type="PANTHER" id="PTHR24092:SF33">
    <property type="entry name" value="PHOSPHOLIPID-TRANSPORTING ATPASE IH"/>
    <property type="match status" value="1"/>
</dbReference>
<dbReference type="PANTHER" id="PTHR24092">
    <property type="entry name" value="PROBABLE PHOSPHOLIPID-TRANSPORTING ATPASE"/>
    <property type="match status" value="1"/>
</dbReference>
<dbReference type="Pfam" id="PF13246">
    <property type="entry name" value="Cation_ATPase"/>
    <property type="match status" value="1"/>
</dbReference>
<dbReference type="Pfam" id="PF00122">
    <property type="entry name" value="E1-E2_ATPase"/>
    <property type="match status" value="1"/>
</dbReference>
<dbReference type="Pfam" id="PF16212">
    <property type="entry name" value="PhoLip_ATPase_C"/>
    <property type="match status" value="1"/>
</dbReference>
<dbReference type="Pfam" id="PF16209">
    <property type="entry name" value="PhoLip_ATPase_N"/>
    <property type="match status" value="1"/>
</dbReference>
<dbReference type="PRINTS" id="PR00119">
    <property type="entry name" value="CATATPASE"/>
</dbReference>
<dbReference type="SFLD" id="SFLDS00003">
    <property type="entry name" value="Haloacid_Dehalogenase"/>
    <property type="match status" value="1"/>
</dbReference>
<dbReference type="SFLD" id="SFLDF00027">
    <property type="entry name" value="p-type_atpase"/>
    <property type="match status" value="1"/>
</dbReference>
<dbReference type="SUPFAM" id="SSF81653">
    <property type="entry name" value="Calcium ATPase, transduction domain A"/>
    <property type="match status" value="1"/>
</dbReference>
<dbReference type="SUPFAM" id="SSF81665">
    <property type="entry name" value="Calcium ATPase, transmembrane domain M"/>
    <property type="match status" value="1"/>
</dbReference>
<dbReference type="SUPFAM" id="SSF56784">
    <property type="entry name" value="HAD-like"/>
    <property type="match status" value="1"/>
</dbReference>
<dbReference type="SUPFAM" id="SSF81660">
    <property type="entry name" value="Metal cation-transporting ATPase, ATP-binding domain N"/>
    <property type="match status" value="1"/>
</dbReference>
<dbReference type="PROSITE" id="PS00154">
    <property type="entry name" value="ATPASE_E1_E2"/>
    <property type="match status" value="1"/>
</dbReference>
<gene>
    <name type="primary">Atp11a</name>
</gene>
<comment type="function">
    <text evidence="2 7">Catalytic component of a P4-ATPase flippase complex which catalyzes the hydrolysis of ATP coupled to the transport of aminophospholipids, phosphatidylserines (PS) and phosphatidylethanolamines (PE), from the outer to the inner leaflet of the plasma membrane (By similarity). Does not show flippase activity toward phosphatidylcholine (PC) (By similarity). Contributes to the maintenance of membrane lipid asymmetry with a specific role in morphogenesis of muscle cells. In myoblasts, mediates PS enrichment at the inner leaflet of plasma membrane, triggering PIEZO1-dependent Ca2+ influx and Rho GTPases signal transduction, subsequently leading to the assembly of cortical actomyosin fibers and myotube formation (PubMed:29799007).</text>
</comment>
<comment type="catalytic activity">
    <reaction evidence="2">
        <text>ATP + H2O + phospholipidSide 1 = ADP + phosphate + phospholipidSide 2.</text>
        <dbReference type="EC" id="7.6.2.1"/>
    </reaction>
</comment>
<comment type="catalytic activity">
    <reaction evidence="2">
        <text>a 1,2-diacyl-sn-glycero-3-phospho-L-serine(out) + ATP + H2O = a 1,2-diacyl-sn-glycero-3-phospho-L-serine(in) + ADP + phosphate + H(+)</text>
        <dbReference type="Rhea" id="RHEA:38567"/>
        <dbReference type="ChEBI" id="CHEBI:15377"/>
        <dbReference type="ChEBI" id="CHEBI:15378"/>
        <dbReference type="ChEBI" id="CHEBI:30616"/>
        <dbReference type="ChEBI" id="CHEBI:43474"/>
        <dbReference type="ChEBI" id="CHEBI:57262"/>
        <dbReference type="ChEBI" id="CHEBI:456216"/>
    </reaction>
    <physiologicalReaction direction="left-to-right" evidence="2">
        <dbReference type="Rhea" id="RHEA:38568"/>
    </physiologicalReaction>
</comment>
<comment type="catalytic activity">
    <reaction evidence="2">
        <text>a 1,2-diacyl-sn-glycero-3-phosphoethanolamine(out) + ATP + H2O = a 1,2-diacyl-sn-glycero-3-phosphoethanolamine(in) + ADP + phosphate + H(+)</text>
        <dbReference type="Rhea" id="RHEA:66132"/>
        <dbReference type="ChEBI" id="CHEBI:15377"/>
        <dbReference type="ChEBI" id="CHEBI:15378"/>
        <dbReference type="ChEBI" id="CHEBI:30616"/>
        <dbReference type="ChEBI" id="CHEBI:43474"/>
        <dbReference type="ChEBI" id="CHEBI:64612"/>
        <dbReference type="ChEBI" id="CHEBI:456216"/>
    </reaction>
    <physiologicalReaction direction="left-to-right" evidence="2">
        <dbReference type="Rhea" id="RHEA:66133"/>
    </physiologicalReaction>
</comment>
<comment type="cofactor">
    <cofactor evidence="5">
        <name>Mg(2+)</name>
        <dbReference type="ChEBI" id="CHEBI:18420"/>
    </cofactor>
</comment>
<comment type="subunit">
    <text evidence="7 8">Component of a P4-ATPase flippase complex which consists of a catalytic alpha subunit ATP11A and an accessory beta subunit TMEM30A.</text>
</comment>
<comment type="subcellular location">
    <subcellularLocation>
        <location evidence="7">Cell membrane</location>
        <topology evidence="6">Multi-pass membrane protein</topology>
    </subcellularLocation>
    <subcellularLocation>
        <location evidence="2">Early endosome</location>
    </subcellularLocation>
    <subcellularLocation>
        <location evidence="2">Recycling endosome</location>
    </subcellularLocation>
    <subcellularLocation>
        <location evidence="2">Endoplasmic reticulum membrane</location>
        <topology evidence="6">Multi-pass membrane protein</topology>
    </subcellularLocation>
    <text evidence="2">Efficient exit from the endoplasmic reticulum requires the presence of TMEM30A.</text>
</comment>
<comment type="tissue specificity">
    <text evidence="7 8 10">Widely expressed. Expressed in myoblasts (PubMed:29799007). Expressed in retina, brain, liver, testes and kidney (at protein level) (PubMed:29799007, PubMed:30018401). Expressed in the inner ear.</text>
</comment>
<comment type="PTM">
    <text evidence="2">Proteolytically cleaved by CASP3.</text>
</comment>
<comment type="disruption phenotype">
    <text evidence="10">Conditional knockout in afferent spiral ganglion neurons leads to age-progressive hearing dysfunction characterized by abnormal auditory brainstem responses and normal otoacoustic emissions. Outer and middle ear function is normal.</text>
</comment>
<comment type="similarity">
    <text evidence="11">Belongs to the cation transport ATPase (P-type) (TC 3.A.3) family. Type IV subfamily.</text>
</comment>
<sequence>MDCSLLRTLVRRYCAGEENWVDSRTIYVGHKEPPPGAEAYIPQRYPDNRIVSSKYTFWNFIPKNLFEQFRRIANFYFLIIFLVQLIIDTPTSPVTSGLPLFFVITVTAIKQGYEDWLRHKADNAMNQCPVHFIQHGKLVRKQSRKLRVGDIVMVKEDETFPCDLIFLSSNRADGTCHVTTASLDGESSHKTHYAVQDTKGFHTEADVDSLHATIECEQPQPDLYKFVGRINVYNDLNDPVVRPLGSENLLLRGATLKNTEKIFGVAIYTGMETKMALNYQSKSQKRSAVEKSMNTFLIVYLCILVSKALINTVLKYVWQSEPFRDEPWYNEKTESERQRNLFLRAFTDFLAFMVLFNYIIPVSMYVTVEMQKFLGSYFITWDEDMFDEEMGEGPLVNTSDLNEELGQVEYIFTDKTGTLTENNMAFKECCIEGHVYVPHVICNGQVLPDSSGIDMIDSSPGVCGREREELFFRAICLCHTVQVKDDHCGDDVDGPQKSPDAKSCVYISSSPDEVALVEGVQRLGFTYLRLKDNYMEILNRENDIERFELLEVLTFDSVRRRMSVIVKSTTGEIYLFCKGADSSIFPRVIEGKVDQVRSRVERNAVEGLRTLCVAYKRLEPEQYEDACRLLQSAKVALQDREKKLAEAYEQIEKDLVLLGATAVEDRLQEKAADTIEALQKAGIKVWVLTGDKMETASATCYACKLFRRSTQLLELTTKKLEEQSLHDVLFDLSKTVLRCSGSMTRDSFSGLSTDMHDYGLIIDGAALSLIMKPREDGSSSGNYRELFLEICRNCSAVLCCRMAPLQKAQIVKLIKFSKEHPITLAIGDGANDVSMILEAHVGIGVIGKEGRQAARNSDYAIPKFKHLKKMLLVHGHFYYIRISELVQYFFYKNVCFIFPQFLYQFFCGFSQQTLYDTAYLTLYNISFTSLPILLYSLMEQHVGIDVLKRDPTLYRDIAKNALLRWRVFIYWTFLGVFDALVFFFGAYFIFENTTVTINGQMFGNWTFGTLVFTVMVLTVTLKLALDTHYWTWINHFVIWGSLLFYIAFSLLWGGVIWPFLSYQRMYYVFISMLSSGPAWLGIILLVTVGLLPDVLKKVLCRQLWPTATERTQNIQHQDSISEFTPLASLPSWGAQGSRLLAAQCSSPSGRVVCSRWESEECPVLPLHPGLPHKARYGCCRSSLEMPT</sequence>
<reference key="1">
    <citation type="journal article" date="1999" name="Physiol. Genomics">
        <title>Differential expression of putative transbilayer amphipath transporters.</title>
        <authorList>
            <person name="Halleck M.S."/>
            <person name="Lawler J.F. Jr."/>
            <person name="Blackshaw S."/>
            <person name="Gao L."/>
            <person name="Nagarajan P."/>
            <person name="Hacker C."/>
            <person name="Pyle S."/>
            <person name="Newman J.T."/>
            <person name="Nakanishi Y."/>
            <person name="Ando H."/>
            <person name="Weinstock D."/>
            <person name="Williamson P.L."/>
            <person name="Schlegel R.A."/>
        </authorList>
    </citation>
    <scope>NUCLEOTIDE SEQUENCE [MRNA]</scope>
    <source>
        <strain>ICR</strain>
        <tissue>Brain</tissue>
    </source>
</reference>
<reference key="2">
    <citation type="journal article" date="2004" name="Genome Res.">
        <title>The status, quality, and expansion of the NIH full-length cDNA project: the Mammalian Gene Collection (MGC).</title>
        <authorList>
            <consortium name="The MGC Project Team"/>
        </authorList>
    </citation>
    <scope>NUCLEOTIDE SEQUENCE [LARGE SCALE MRNA]</scope>
    <source>
        <tissue>Brain</tissue>
    </source>
</reference>
<reference key="3">
    <citation type="journal article" date="2010" name="Cell">
        <title>A tissue-specific atlas of mouse protein phosphorylation and expression.</title>
        <authorList>
            <person name="Huttlin E.L."/>
            <person name="Jedrychowski M.P."/>
            <person name="Elias J.E."/>
            <person name="Goswami T."/>
            <person name="Rad R."/>
            <person name="Beausoleil S.A."/>
            <person name="Villen J."/>
            <person name="Haas W."/>
            <person name="Sowa M.E."/>
            <person name="Gygi S.P."/>
        </authorList>
    </citation>
    <scope>IDENTIFICATION BY MASS SPECTROMETRY [LARGE SCALE ANALYSIS]</scope>
    <source>
        <tissue>Kidney</tissue>
        <tissue>Lung</tissue>
        <tissue>Testis</tissue>
    </source>
</reference>
<reference key="4">
    <citation type="journal article" date="2018" name="Nat. Commun.">
        <title>Cell surface flip-flop of phosphatidylserine is critical for PIEZO1-mediated myotube formation.</title>
        <authorList>
            <person name="Tsuchiya M."/>
            <person name="Hara Y."/>
            <person name="Okuda M."/>
            <person name="Itoh K."/>
            <person name="Nishioka R."/>
            <person name="Shiomi A."/>
            <person name="Nagao K."/>
            <person name="Mori M."/>
            <person name="Mori Y."/>
            <person name="Ikenouchi J."/>
            <person name="Suzuki R."/>
            <person name="Tanaka M."/>
            <person name="Ohwada T."/>
            <person name="Aoki J."/>
            <person name="Kanagawa M."/>
            <person name="Toda T."/>
            <person name="Nagata Y."/>
            <person name="Matsuda R."/>
            <person name="Takayama Y."/>
            <person name="Tominaga M."/>
            <person name="Umeda M."/>
        </authorList>
    </citation>
    <scope>FUNCTION</scope>
    <scope>INTERACTION WITH TMEM30A</scope>
    <scope>TISSUE SPECIFICITY</scope>
    <scope>SUBCELLULAR LOCATION</scope>
</reference>
<reference key="5">
    <citation type="journal article" date="2018" name="Sci. Rep.">
        <title>Proteomic Analysis and Functional Characterization of P4-ATPase Phospholipid Flippases from Murine Tissues.</title>
        <authorList>
            <person name="Wang J."/>
            <person name="Molday L.L."/>
            <person name="Hii T."/>
            <person name="Coleman J.A."/>
            <person name="Wen T."/>
            <person name="Andersen J.P."/>
            <person name="Molday R.S."/>
        </authorList>
    </citation>
    <scope>IDENTIFICATION BY MASS SPECTROMETRY</scope>
    <scope>INTERACTION WITH TMEM30A</scope>
    <scope>TISSUE SPECIFICITY</scope>
</reference>
<reference key="6">
    <citation type="journal article" date="2021" name="J. Clin. Invest.">
        <title>A sublethal ATP11A mutation associated with neurological deterioration causes aberrant phosphatidylcholine flipping in plasma membranes.</title>
        <authorList>
            <person name="Segawa K."/>
            <person name="Kikuchi A."/>
            <person name="Noji T."/>
            <person name="Sugiura Y."/>
            <person name="Hiraga K."/>
            <person name="Suzuki C."/>
            <person name="Haginoya K."/>
            <person name="Kobayashi Y."/>
            <person name="Matsunaga M."/>
            <person name="Ochiai Y."/>
            <person name="Yamada K."/>
            <person name="Nishimura T."/>
            <person name="Iwasawa S."/>
            <person name="Shoji W."/>
            <person name="Sugihara F."/>
            <person name="Nishino K."/>
            <person name="Kosako H."/>
            <person name="Ikawa M."/>
            <person name="Uchiyama Y."/>
            <person name="Suematsu M."/>
            <person name="Ishikita H."/>
            <person name="Kure S."/>
            <person name="Nagata S."/>
        </authorList>
    </citation>
    <scope>MUTAGENESIS OF GLN-84</scope>
</reference>
<reference key="7">
    <citation type="journal article" date="2023" name="Hum. Mol. Genet.">
        <title>A mutation in ATP11A causes autosomal-dominant auditory neuropathy type 2.</title>
        <authorList>
            <person name="Chepurwar S."/>
            <person name="von Loh S.M."/>
            <person name="Wigger D.C."/>
            <person name="Neef J."/>
            <person name="Frommolt P."/>
            <person name="Beutner D."/>
            <person name="Lang-Roth R."/>
            <person name="Kubisch C."/>
            <person name="Strenzke N."/>
            <person name="Volk A.E."/>
        </authorList>
    </citation>
    <scope>TISSUE SPECIFICITY</scope>
    <scope>DISRUPTION PHENOTYPE</scope>
</reference>
<name>AT11A_MOUSE</name>
<evidence type="ECO:0000250" key="1">
    <source>
        <dbReference type="UniProtKB" id="P04191"/>
    </source>
</evidence>
<evidence type="ECO:0000250" key="2">
    <source>
        <dbReference type="UniProtKB" id="P98196"/>
    </source>
</evidence>
<evidence type="ECO:0000250" key="3">
    <source>
        <dbReference type="UniProtKB" id="Q8NB49"/>
    </source>
</evidence>
<evidence type="ECO:0000250" key="4">
    <source>
        <dbReference type="UniProtKB" id="Q9HD20"/>
    </source>
</evidence>
<evidence type="ECO:0000250" key="5">
    <source>
        <dbReference type="UniProtKB" id="Q9Y2Q0"/>
    </source>
</evidence>
<evidence type="ECO:0000255" key="6"/>
<evidence type="ECO:0000269" key="7">
    <source>
    </source>
</evidence>
<evidence type="ECO:0000269" key="8">
    <source>
    </source>
</evidence>
<evidence type="ECO:0000269" key="9">
    <source>
    </source>
</evidence>
<evidence type="ECO:0000269" key="10">
    <source>
    </source>
</evidence>
<evidence type="ECO:0000305" key="11"/>
<keyword id="KW-0067">ATP-binding</keyword>
<keyword id="KW-1003">Cell membrane</keyword>
<keyword id="KW-0256">Endoplasmic reticulum</keyword>
<keyword id="KW-0967">Endosome</keyword>
<keyword id="KW-0445">Lipid transport</keyword>
<keyword id="KW-0460">Magnesium</keyword>
<keyword id="KW-0472">Membrane</keyword>
<keyword id="KW-0479">Metal-binding</keyword>
<keyword id="KW-0547">Nucleotide-binding</keyword>
<keyword id="KW-0597">Phosphoprotein</keyword>
<keyword id="KW-1185">Reference proteome</keyword>
<keyword id="KW-1278">Translocase</keyword>
<keyword id="KW-0812">Transmembrane</keyword>
<keyword id="KW-1133">Transmembrane helix</keyword>
<keyword id="KW-0813">Transport</keyword>
<organism>
    <name type="scientific">Mus musculus</name>
    <name type="common">Mouse</name>
    <dbReference type="NCBI Taxonomy" id="10090"/>
    <lineage>
        <taxon>Eukaryota</taxon>
        <taxon>Metazoa</taxon>
        <taxon>Chordata</taxon>
        <taxon>Craniata</taxon>
        <taxon>Vertebrata</taxon>
        <taxon>Euteleostomi</taxon>
        <taxon>Mammalia</taxon>
        <taxon>Eutheria</taxon>
        <taxon>Euarchontoglires</taxon>
        <taxon>Glires</taxon>
        <taxon>Rodentia</taxon>
        <taxon>Myomorpha</taxon>
        <taxon>Muroidea</taxon>
        <taxon>Muridae</taxon>
        <taxon>Murinae</taxon>
        <taxon>Mus</taxon>
        <taxon>Mus</taxon>
    </lineage>
</organism>
<proteinExistence type="evidence at protein level"/>
<feature type="chain" id="PRO_0000046370" description="Phospholipid-transporting ATPase IH">
    <location>
        <begin position="1"/>
        <end position="1187"/>
    </location>
</feature>
<feature type="topological domain" description="Cytoplasmic" evidence="6">
    <location>
        <begin position="1"/>
        <end position="61"/>
    </location>
</feature>
<feature type="transmembrane region" description="Helical" evidence="6">
    <location>
        <begin position="62"/>
        <end position="82"/>
    </location>
</feature>
<feature type="topological domain" description="Extracellular" evidence="6">
    <location>
        <begin position="83"/>
        <end position="88"/>
    </location>
</feature>
<feature type="transmembrane region" description="Helical" evidence="6">
    <location>
        <begin position="89"/>
        <end position="110"/>
    </location>
</feature>
<feature type="topological domain" description="Cytoplasmic" evidence="6">
    <location>
        <begin position="111"/>
        <end position="296"/>
    </location>
</feature>
<feature type="transmembrane region" description="Helical" evidence="6">
    <location>
        <begin position="297"/>
        <end position="318"/>
    </location>
</feature>
<feature type="topological domain" description="Extracellular" evidence="6">
    <location>
        <begin position="319"/>
        <end position="349"/>
    </location>
</feature>
<feature type="transmembrane region" description="Helical" evidence="6">
    <location>
        <begin position="350"/>
        <end position="372"/>
    </location>
</feature>
<feature type="topological domain" description="Cytoplasmic" evidence="6">
    <location>
        <begin position="373"/>
        <end position="884"/>
    </location>
</feature>
<feature type="transmembrane region" description="Helical" evidence="6">
    <location>
        <begin position="885"/>
        <end position="905"/>
    </location>
</feature>
<feature type="topological domain" description="Extracellular" evidence="6">
    <location>
        <begin position="906"/>
        <end position="917"/>
    </location>
</feature>
<feature type="transmembrane region" description="Helical" evidence="6">
    <location>
        <begin position="918"/>
        <end position="937"/>
    </location>
</feature>
<feature type="topological domain" description="Cytoplasmic" evidence="6">
    <location>
        <begin position="938"/>
        <end position="967"/>
    </location>
</feature>
<feature type="transmembrane region" description="Helical" evidence="6">
    <location>
        <begin position="968"/>
        <end position="989"/>
    </location>
</feature>
<feature type="topological domain" description="Extracellular" evidence="6">
    <location>
        <begin position="990"/>
        <end position="1003"/>
    </location>
</feature>
<feature type="transmembrane region" description="Helical" evidence="6">
    <location>
        <begin position="1004"/>
        <end position="1026"/>
    </location>
</feature>
<feature type="topological domain" description="Cytoplasmic" evidence="6">
    <location>
        <begin position="1027"/>
        <end position="1032"/>
    </location>
</feature>
<feature type="transmembrane region" description="Helical" evidence="6">
    <location>
        <begin position="1033"/>
        <end position="1053"/>
    </location>
</feature>
<feature type="topological domain" description="Extracellular" evidence="6">
    <location>
        <begin position="1054"/>
        <end position="1071"/>
    </location>
</feature>
<feature type="transmembrane region" description="Helical" evidence="6">
    <location>
        <begin position="1072"/>
        <end position="1096"/>
    </location>
</feature>
<feature type="topological domain" description="Cytoplasmic" evidence="6">
    <location>
        <begin position="1097"/>
        <end position="1138"/>
    </location>
</feature>
<feature type="active site" description="4-aspartylphosphate intermediate" evidence="4">
    <location>
        <position position="414"/>
    </location>
</feature>
<feature type="binding site" evidence="5">
    <location>
        <position position="414"/>
    </location>
    <ligand>
        <name>ATP</name>
        <dbReference type="ChEBI" id="CHEBI:30616"/>
    </ligand>
</feature>
<feature type="binding site" evidence="5">
    <location>
        <position position="414"/>
    </location>
    <ligand>
        <name>Mg(2+)</name>
        <dbReference type="ChEBI" id="CHEBI:18420"/>
    </ligand>
</feature>
<feature type="binding site" evidence="5">
    <location>
        <position position="415"/>
    </location>
    <ligand>
        <name>ATP</name>
        <dbReference type="ChEBI" id="CHEBI:30616"/>
    </ligand>
</feature>
<feature type="binding site" evidence="5">
    <location>
        <position position="416"/>
    </location>
    <ligand>
        <name>ATP</name>
        <dbReference type="ChEBI" id="CHEBI:30616"/>
    </ligand>
</feature>
<feature type="binding site" evidence="5">
    <location>
        <position position="416"/>
    </location>
    <ligand>
        <name>Mg(2+)</name>
        <dbReference type="ChEBI" id="CHEBI:18420"/>
    </ligand>
</feature>
<feature type="binding site" evidence="1">
    <location>
        <position position="513"/>
    </location>
    <ligand>
        <name>ATP</name>
        <dbReference type="ChEBI" id="CHEBI:30616"/>
    </ligand>
</feature>
<feature type="binding site" evidence="5">
    <location>
        <position position="555"/>
    </location>
    <ligand>
        <name>ATP</name>
        <dbReference type="ChEBI" id="CHEBI:30616"/>
    </ligand>
</feature>
<feature type="binding site" evidence="1">
    <location>
        <position position="578"/>
    </location>
    <ligand>
        <name>ATP</name>
        <dbReference type="ChEBI" id="CHEBI:30616"/>
    </ligand>
</feature>
<feature type="binding site" evidence="1">
    <location>
        <position position="609"/>
    </location>
    <ligand>
        <name>ATP</name>
        <dbReference type="ChEBI" id="CHEBI:30616"/>
    </ligand>
</feature>
<feature type="binding site" evidence="1">
    <location>
        <position position="689"/>
    </location>
    <ligand>
        <name>ATP</name>
        <dbReference type="ChEBI" id="CHEBI:30616"/>
    </ligand>
</feature>
<feature type="binding site" evidence="1">
    <location>
        <position position="690"/>
    </location>
    <ligand>
        <name>ATP</name>
        <dbReference type="ChEBI" id="CHEBI:30616"/>
    </ligand>
</feature>
<feature type="binding site" evidence="1">
    <location>
        <position position="691"/>
    </location>
    <ligand>
        <name>ATP</name>
        <dbReference type="ChEBI" id="CHEBI:30616"/>
    </ligand>
</feature>
<feature type="binding site" evidence="1">
    <location>
        <position position="801"/>
    </location>
    <ligand>
        <name>ATP</name>
        <dbReference type="ChEBI" id="CHEBI:30616"/>
    </ligand>
</feature>
<feature type="binding site" evidence="1">
    <location>
        <position position="807"/>
    </location>
    <ligand>
        <name>ATP</name>
        <dbReference type="ChEBI" id="CHEBI:30616"/>
    </ligand>
</feature>
<feature type="binding site" evidence="3">
    <location>
        <position position="828"/>
    </location>
    <ligand>
        <name>Mg(2+)</name>
        <dbReference type="ChEBI" id="CHEBI:18420"/>
    </ligand>
</feature>
<feature type="binding site" evidence="5">
    <location>
        <position position="831"/>
    </location>
    <ligand>
        <name>ATP</name>
        <dbReference type="ChEBI" id="CHEBI:30616"/>
    </ligand>
</feature>
<feature type="binding site" evidence="5">
    <location>
        <position position="832"/>
    </location>
    <ligand>
        <name>ATP</name>
        <dbReference type="ChEBI" id="CHEBI:30616"/>
    </ligand>
</feature>
<feature type="binding site" evidence="3">
    <location>
        <position position="832"/>
    </location>
    <ligand>
        <name>Mg(2+)</name>
        <dbReference type="ChEBI" id="CHEBI:18420"/>
    </ligand>
</feature>
<feature type="site" description="Cleavage; by CASP3" evidence="2">
    <location>
        <begin position="457"/>
        <end position="458"/>
    </location>
</feature>
<feature type="site" description="Cleavage; by CASP3" evidence="2">
    <location>
        <begin position="493"/>
        <end position="494"/>
    </location>
</feature>
<feature type="modified residue" description="Phosphoserine" evidence="2">
    <location>
        <position position="740"/>
    </location>
</feature>
<feature type="modified residue" description="Phosphoserine" evidence="3">
    <location>
        <position position="1148"/>
    </location>
</feature>
<feature type="modified residue" description="Phosphoserine" evidence="3">
    <location>
        <position position="1158"/>
    </location>
</feature>
<feature type="mutagenesis site" description="Mutant mice surviving beyond the perinatal period show a reduction in brain size, dilated lateral ventricles and neurologic deficits. Increased sphingomyelin levels in various regions of mutant embryos." evidence="9">
    <original>Q</original>
    <variation>E</variation>
    <location>
        <position position="84"/>
    </location>
</feature>